<protein>
    <recommendedName>
        <fullName evidence="5">U1-ctenitoxin-Pn1a</fullName>
        <shortName evidence="5">U1-CNTX-Pn1a</shortName>
    </recommendedName>
    <alternativeName>
        <fullName evidence="4">Toxin Pn4B</fullName>
    </alternativeName>
</protein>
<comment type="function">
    <text evidence="2">Insecticidal neurotoxin that reversibly inhibits the N-methyl-D-aspartate (NMDA)-subtype of ionotropic glutamate receptor (GRIN) and inhibits inactivation of insect sodium channels (Nav). In vivo, is highly toxic to insects.</text>
</comment>
<comment type="subcellular location">
    <subcellularLocation>
        <location evidence="2">Secreted</location>
    </subcellularLocation>
</comment>
<comment type="tissue specificity">
    <text evidence="6">Expressed by the venom gland.</text>
</comment>
<comment type="domain">
    <text evidence="5">The presence of a 'disulfide through disulfide knot' structurally defines this protein as a knottin.</text>
</comment>
<comment type="similarity">
    <text evidence="5">Belongs to the neurotoxin 03 (Tx2) family. 05 subfamily.</text>
</comment>
<accession>P61229</accession>
<proteinExistence type="inferred from homology"/>
<dbReference type="ArachnoServer" id="AS000282">
    <property type="toxin name" value="U1-ctenitoxin-Pn1a"/>
</dbReference>
<dbReference type="GO" id="GO:0005576">
    <property type="term" value="C:extracellular region"/>
    <property type="evidence" value="ECO:0007669"/>
    <property type="project" value="UniProtKB-SubCell"/>
</dbReference>
<dbReference type="GO" id="GO:0035792">
    <property type="term" value="C:host cell postsynaptic membrane"/>
    <property type="evidence" value="ECO:0007669"/>
    <property type="project" value="UniProtKB-KW"/>
</dbReference>
<dbReference type="GO" id="GO:0017080">
    <property type="term" value="F:sodium channel regulator activity"/>
    <property type="evidence" value="ECO:0007669"/>
    <property type="project" value="UniProtKB-KW"/>
</dbReference>
<dbReference type="GO" id="GO:0090729">
    <property type="term" value="F:toxin activity"/>
    <property type="evidence" value="ECO:0007669"/>
    <property type="project" value="UniProtKB-KW"/>
</dbReference>
<organism>
    <name type="scientific">Phoneutria nigriventer</name>
    <name type="common">Brazilian armed spider</name>
    <name type="synonym">Ctenus nigriventer</name>
    <dbReference type="NCBI Taxonomy" id="6918"/>
    <lineage>
        <taxon>Eukaryota</taxon>
        <taxon>Metazoa</taxon>
        <taxon>Ecdysozoa</taxon>
        <taxon>Arthropoda</taxon>
        <taxon>Chelicerata</taxon>
        <taxon>Arachnida</taxon>
        <taxon>Araneae</taxon>
        <taxon>Araneomorphae</taxon>
        <taxon>Entelegynae</taxon>
        <taxon>Lycosoidea</taxon>
        <taxon>Ctenidae</taxon>
        <taxon>Phoneutria</taxon>
    </lineage>
</organism>
<reference key="1">
    <citation type="journal article" date="2000" name="Toxicon">
        <title>Molecular cloning of cDNAs encoding insecticidal neurotoxic peptides from the spider Phoneutria nigriventer.</title>
        <authorList>
            <person name="Penaforte C.L."/>
            <person name="Prado V.F."/>
            <person name="Prado M.A.M."/>
            <person name="Romano-Silva M.A."/>
            <person name="Guimaraes P.E.M."/>
            <person name="De Marco L."/>
            <person name="Gomez M.V."/>
            <person name="Kalapothakis E."/>
        </authorList>
    </citation>
    <scope>NUCLEOTIDE SEQUENCE [MRNA]</scope>
    <source>
        <tissue>Venom gland</tissue>
    </source>
</reference>
<keyword id="KW-1015">Disulfide bond</keyword>
<keyword id="KW-0872">Ion channel impairing toxin</keyword>
<keyword id="KW-1028">Ionotropic glutamate receptor inhibitor</keyword>
<keyword id="KW-0960">Knottin</keyword>
<keyword id="KW-0528">Neurotoxin</keyword>
<keyword id="KW-0629">Postsynaptic neurotoxin</keyword>
<keyword id="KW-0964">Secreted</keyword>
<keyword id="KW-0732">Signal</keyword>
<keyword id="KW-0800">Toxin</keyword>
<keyword id="KW-0738">Voltage-gated sodium channel impairing toxin</keyword>
<name>TX35A_PHONI</name>
<sequence>MKVAIVFLSLLVLAFASESIEENREEFPVEESARCGDINAPCQSDCDCCGYSVTCDCYWSSSCKCRESLFPLGMALRKAFCQNKI</sequence>
<evidence type="ECO:0000250" key="1"/>
<evidence type="ECO:0000250" key="2">
    <source>
        <dbReference type="UniProtKB" id="P59367"/>
    </source>
</evidence>
<evidence type="ECO:0000255" key="3"/>
<evidence type="ECO:0000303" key="4">
    <source>
    </source>
</evidence>
<evidence type="ECO:0000305" key="5"/>
<evidence type="ECO:0000305" key="6">
    <source>
    </source>
</evidence>
<feature type="signal peptide" evidence="3">
    <location>
        <begin position="1"/>
        <end position="16"/>
    </location>
</feature>
<feature type="propeptide" id="PRO_0000035511" evidence="1">
    <location>
        <begin position="17"/>
        <end position="34"/>
    </location>
</feature>
<feature type="chain" id="PRO_0000035512" description="U1-ctenitoxin-Pn1a" evidence="6">
    <location>
        <begin position="35"/>
        <end position="81"/>
    </location>
</feature>
<feature type="propeptide" id="PRO_0000035513" evidence="5">
    <location>
        <begin position="82"/>
        <end position="85"/>
    </location>
</feature>
<feature type="disulfide bond" evidence="5">
    <location>
        <begin position="35"/>
        <end position="49"/>
    </location>
</feature>
<feature type="disulfide bond" evidence="5">
    <location>
        <begin position="42"/>
        <end position="55"/>
    </location>
</feature>
<feature type="disulfide bond" evidence="5">
    <location>
        <begin position="46"/>
        <end position="81"/>
    </location>
</feature>
<feature type="disulfide bond" evidence="5">
    <location>
        <begin position="48"/>
        <end position="65"/>
    </location>
</feature>
<feature type="disulfide bond" evidence="5">
    <location>
        <begin position="57"/>
        <end position="63"/>
    </location>
</feature>